<feature type="chain" id="PRO_0000049899" description="Uncharacterized protein YtmB">
    <location>
        <begin position="1"/>
        <end position="80"/>
    </location>
</feature>
<feature type="strand" evidence="1">
    <location>
        <begin position="3"/>
        <end position="7"/>
    </location>
</feature>
<feature type="strand" evidence="1">
    <location>
        <begin position="9"/>
        <end position="12"/>
    </location>
</feature>
<feature type="strand" evidence="1">
    <location>
        <begin position="18"/>
        <end position="31"/>
    </location>
</feature>
<feature type="strand" evidence="1">
    <location>
        <begin position="37"/>
        <end position="46"/>
    </location>
</feature>
<feature type="strand" evidence="1">
    <location>
        <begin position="53"/>
        <end position="63"/>
    </location>
</feature>
<feature type="strand" evidence="1">
    <location>
        <begin position="66"/>
        <end position="78"/>
    </location>
</feature>
<evidence type="ECO:0007829" key="1">
    <source>
        <dbReference type="PDB" id="2NWA"/>
    </source>
</evidence>
<name>YTMB_BACSU</name>
<sequence>MGMPVEFNTLIVTKGKEVRIDENIFTLEKDGYRVYPMEIPMDVRKTKFGEKSGTAEVQKLQWEEGRTIITYKLTSLHSVN</sequence>
<dbReference type="EMBL" id="AF008220">
    <property type="protein sequence ID" value="AAC00241.1"/>
    <property type="molecule type" value="Genomic_DNA"/>
</dbReference>
<dbReference type="EMBL" id="AL009126">
    <property type="protein sequence ID" value="CAB15035.1"/>
    <property type="molecule type" value="Genomic_DNA"/>
</dbReference>
<dbReference type="PIR" id="B69996">
    <property type="entry name" value="B69996"/>
</dbReference>
<dbReference type="RefSeq" id="NP_390935.1">
    <property type="nucleotide sequence ID" value="NC_000964.3"/>
</dbReference>
<dbReference type="RefSeq" id="WP_004398611.1">
    <property type="nucleotide sequence ID" value="NZ_OZ025638.1"/>
</dbReference>
<dbReference type="PDB" id="2NWA">
    <property type="method" value="X-ray"/>
    <property type="resolution" value="2.70 A"/>
    <property type="chains" value="A/B/C/D/E/F/G/H=1-80"/>
</dbReference>
<dbReference type="PDBsum" id="2NWA"/>
<dbReference type="SMR" id="O34365"/>
<dbReference type="STRING" id="224308.BSU30570"/>
<dbReference type="PaxDb" id="224308-BSU30570"/>
<dbReference type="EnsemblBacteria" id="CAB15035">
    <property type="protein sequence ID" value="CAB15035"/>
    <property type="gene ID" value="BSU_30570"/>
</dbReference>
<dbReference type="GeneID" id="937228"/>
<dbReference type="KEGG" id="bsu:BSU30570"/>
<dbReference type="PATRIC" id="fig|224308.179.peg.3315"/>
<dbReference type="eggNOG" id="ENOG5032SFQ">
    <property type="taxonomic scope" value="Bacteria"/>
</dbReference>
<dbReference type="InParanoid" id="O34365"/>
<dbReference type="OrthoDB" id="2361576at2"/>
<dbReference type="BioCyc" id="BSUB:BSU30570-MONOMER"/>
<dbReference type="EvolutionaryTrace" id="O34365"/>
<dbReference type="Proteomes" id="UP000001570">
    <property type="component" value="Chromosome"/>
</dbReference>
<dbReference type="Gene3D" id="2.40.240.20">
    <property type="entry name" value="Hypothetical PUA domain-like, domain 1"/>
    <property type="match status" value="1"/>
</dbReference>
<dbReference type="InterPro" id="IPR019699">
    <property type="entry name" value="DUF2584"/>
</dbReference>
<dbReference type="InterPro" id="IPR015947">
    <property type="entry name" value="PUA-like_sf"/>
</dbReference>
<dbReference type="Pfam" id="PF10763">
    <property type="entry name" value="DUF2584"/>
    <property type="match status" value="1"/>
</dbReference>
<dbReference type="SUPFAM" id="SSF88697">
    <property type="entry name" value="PUA domain-like"/>
    <property type="match status" value="1"/>
</dbReference>
<organism>
    <name type="scientific">Bacillus subtilis (strain 168)</name>
    <dbReference type="NCBI Taxonomy" id="224308"/>
    <lineage>
        <taxon>Bacteria</taxon>
        <taxon>Bacillati</taxon>
        <taxon>Bacillota</taxon>
        <taxon>Bacilli</taxon>
        <taxon>Bacillales</taxon>
        <taxon>Bacillaceae</taxon>
        <taxon>Bacillus</taxon>
    </lineage>
</organism>
<accession>O34365</accession>
<proteinExistence type="evidence at protein level"/>
<keyword id="KW-0002">3D-structure</keyword>
<keyword id="KW-1185">Reference proteome</keyword>
<reference key="1">
    <citation type="journal article" date="1997" name="Microbiology">
        <title>Sequencing and functional annotation of the Bacillus subtilis genes in the 200 kb rrnB-dnaB region.</title>
        <authorList>
            <person name="Lapidus A."/>
            <person name="Galleron N."/>
            <person name="Sorokin A."/>
            <person name="Ehrlich S.D."/>
        </authorList>
    </citation>
    <scope>NUCLEOTIDE SEQUENCE [GENOMIC DNA]</scope>
    <source>
        <strain>168</strain>
    </source>
</reference>
<reference key="2">
    <citation type="journal article" date="1997" name="Nature">
        <title>The complete genome sequence of the Gram-positive bacterium Bacillus subtilis.</title>
        <authorList>
            <person name="Kunst F."/>
            <person name="Ogasawara N."/>
            <person name="Moszer I."/>
            <person name="Albertini A.M."/>
            <person name="Alloni G."/>
            <person name="Azevedo V."/>
            <person name="Bertero M.G."/>
            <person name="Bessieres P."/>
            <person name="Bolotin A."/>
            <person name="Borchert S."/>
            <person name="Borriss R."/>
            <person name="Boursier L."/>
            <person name="Brans A."/>
            <person name="Braun M."/>
            <person name="Brignell S.C."/>
            <person name="Bron S."/>
            <person name="Brouillet S."/>
            <person name="Bruschi C.V."/>
            <person name="Caldwell B."/>
            <person name="Capuano V."/>
            <person name="Carter N.M."/>
            <person name="Choi S.-K."/>
            <person name="Codani J.-J."/>
            <person name="Connerton I.F."/>
            <person name="Cummings N.J."/>
            <person name="Daniel R.A."/>
            <person name="Denizot F."/>
            <person name="Devine K.M."/>
            <person name="Duesterhoeft A."/>
            <person name="Ehrlich S.D."/>
            <person name="Emmerson P.T."/>
            <person name="Entian K.-D."/>
            <person name="Errington J."/>
            <person name="Fabret C."/>
            <person name="Ferrari E."/>
            <person name="Foulger D."/>
            <person name="Fritz C."/>
            <person name="Fujita M."/>
            <person name="Fujita Y."/>
            <person name="Fuma S."/>
            <person name="Galizzi A."/>
            <person name="Galleron N."/>
            <person name="Ghim S.-Y."/>
            <person name="Glaser P."/>
            <person name="Goffeau A."/>
            <person name="Golightly E.J."/>
            <person name="Grandi G."/>
            <person name="Guiseppi G."/>
            <person name="Guy B.J."/>
            <person name="Haga K."/>
            <person name="Haiech J."/>
            <person name="Harwood C.R."/>
            <person name="Henaut A."/>
            <person name="Hilbert H."/>
            <person name="Holsappel S."/>
            <person name="Hosono S."/>
            <person name="Hullo M.-F."/>
            <person name="Itaya M."/>
            <person name="Jones L.-M."/>
            <person name="Joris B."/>
            <person name="Karamata D."/>
            <person name="Kasahara Y."/>
            <person name="Klaerr-Blanchard M."/>
            <person name="Klein C."/>
            <person name="Kobayashi Y."/>
            <person name="Koetter P."/>
            <person name="Koningstein G."/>
            <person name="Krogh S."/>
            <person name="Kumano M."/>
            <person name="Kurita K."/>
            <person name="Lapidus A."/>
            <person name="Lardinois S."/>
            <person name="Lauber J."/>
            <person name="Lazarevic V."/>
            <person name="Lee S.-M."/>
            <person name="Levine A."/>
            <person name="Liu H."/>
            <person name="Masuda S."/>
            <person name="Mauel C."/>
            <person name="Medigue C."/>
            <person name="Medina N."/>
            <person name="Mellado R.P."/>
            <person name="Mizuno M."/>
            <person name="Moestl D."/>
            <person name="Nakai S."/>
            <person name="Noback M."/>
            <person name="Noone D."/>
            <person name="O'Reilly M."/>
            <person name="Ogawa K."/>
            <person name="Ogiwara A."/>
            <person name="Oudega B."/>
            <person name="Park S.-H."/>
            <person name="Parro V."/>
            <person name="Pohl T.M."/>
            <person name="Portetelle D."/>
            <person name="Porwollik S."/>
            <person name="Prescott A.M."/>
            <person name="Presecan E."/>
            <person name="Pujic P."/>
            <person name="Purnelle B."/>
            <person name="Rapoport G."/>
            <person name="Rey M."/>
            <person name="Reynolds S."/>
            <person name="Rieger M."/>
            <person name="Rivolta C."/>
            <person name="Rocha E."/>
            <person name="Roche B."/>
            <person name="Rose M."/>
            <person name="Sadaie Y."/>
            <person name="Sato T."/>
            <person name="Scanlan E."/>
            <person name="Schleich S."/>
            <person name="Schroeter R."/>
            <person name="Scoffone F."/>
            <person name="Sekiguchi J."/>
            <person name="Sekowska A."/>
            <person name="Seror S.J."/>
            <person name="Serror P."/>
            <person name="Shin B.-S."/>
            <person name="Soldo B."/>
            <person name="Sorokin A."/>
            <person name="Tacconi E."/>
            <person name="Takagi T."/>
            <person name="Takahashi H."/>
            <person name="Takemaru K."/>
            <person name="Takeuchi M."/>
            <person name="Tamakoshi A."/>
            <person name="Tanaka T."/>
            <person name="Terpstra P."/>
            <person name="Tognoni A."/>
            <person name="Tosato V."/>
            <person name="Uchiyama S."/>
            <person name="Vandenbol M."/>
            <person name="Vannier F."/>
            <person name="Vassarotti A."/>
            <person name="Viari A."/>
            <person name="Wambutt R."/>
            <person name="Wedler E."/>
            <person name="Wedler H."/>
            <person name="Weitzenegger T."/>
            <person name="Winters P."/>
            <person name="Wipat A."/>
            <person name="Yamamoto H."/>
            <person name="Yamane K."/>
            <person name="Yasumoto K."/>
            <person name="Yata K."/>
            <person name="Yoshida K."/>
            <person name="Yoshikawa H.-F."/>
            <person name="Zumstein E."/>
            <person name="Yoshikawa H."/>
            <person name="Danchin A."/>
        </authorList>
    </citation>
    <scope>NUCLEOTIDE SEQUENCE [LARGE SCALE GENOMIC DNA]</scope>
    <source>
        <strain>168</strain>
    </source>
</reference>
<reference key="3">
    <citation type="submission" date="2007-01" db="PDB data bank">
        <title>Crystal structure of the hypothetical protein ytmB from Bacillus subtilis subsp. (subtilis str. 168), northeast structural genomics target SR466.</title>
        <authorList>
            <consortium name="Northeast structural genomics consortium (NESG)"/>
        </authorList>
    </citation>
    <scope>X-RAY CRYSTALLOGRAPHY (2.7 ANGSTROMS)</scope>
</reference>
<gene>
    <name type="primary">ytmB</name>
    <name type="ordered locus">BSU30570</name>
</gene>
<protein>
    <recommendedName>
        <fullName>Uncharacterized protein YtmB</fullName>
    </recommendedName>
</protein>